<dbReference type="EMBL" id="DQ317564">
    <property type="protein sequence ID" value="ABC47407.1"/>
    <property type="molecule type" value="mRNA"/>
</dbReference>
<dbReference type="SMR" id="A4GE39"/>
<dbReference type="Allergome" id="490">
    <property type="allergen name" value="Ole e 2"/>
</dbReference>
<dbReference type="GO" id="GO:0005938">
    <property type="term" value="C:cell cortex"/>
    <property type="evidence" value="ECO:0007669"/>
    <property type="project" value="TreeGrafter"/>
</dbReference>
<dbReference type="GO" id="GO:0005856">
    <property type="term" value="C:cytoskeleton"/>
    <property type="evidence" value="ECO:0007669"/>
    <property type="project" value="UniProtKB-SubCell"/>
</dbReference>
<dbReference type="GO" id="GO:0003785">
    <property type="term" value="F:actin monomer binding"/>
    <property type="evidence" value="ECO:0007669"/>
    <property type="project" value="TreeGrafter"/>
</dbReference>
<dbReference type="CDD" id="cd00148">
    <property type="entry name" value="PROF"/>
    <property type="match status" value="1"/>
</dbReference>
<dbReference type="FunFam" id="3.30.450.30:FF:000001">
    <property type="entry name" value="Profilin"/>
    <property type="match status" value="1"/>
</dbReference>
<dbReference type="Gene3D" id="3.30.450.30">
    <property type="entry name" value="Dynein light chain 2a, cytoplasmic"/>
    <property type="match status" value="1"/>
</dbReference>
<dbReference type="InterPro" id="IPR048278">
    <property type="entry name" value="PFN"/>
</dbReference>
<dbReference type="InterPro" id="IPR005455">
    <property type="entry name" value="PFN_euk"/>
</dbReference>
<dbReference type="InterPro" id="IPR036140">
    <property type="entry name" value="PFN_sf"/>
</dbReference>
<dbReference type="InterPro" id="IPR027310">
    <property type="entry name" value="Profilin_CS"/>
</dbReference>
<dbReference type="PANTHER" id="PTHR11604">
    <property type="entry name" value="PROFILIN"/>
    <property type="match status" value="1"/>
</dbReference>
<dbReference type="PANTHER" id="PTHR11604:SF25">
    <property type="entry name" value="PROFILIN-5"/>
    <property type="match status" value="1"/>
</dbReference>
<dbReference type="Pfam" id="PF00235">
    <property type="entry name" value="Profilin"/>
    <property type="match status" value="1"/>
</dbReference>
<dbReference type="PRINTS" id="PR00392">
    <property type="entry name" value="PROFILIN"/>
</dbReference>
<dbReference type="PRINTS" id="PR01640">
    <property type="entry name" value="PROFILINPLNT"/>
</dbReference>
<dbReference type="SMART" id="SM00392">
    <property type="entry name" value="PROF"/>
    <property type="match status" value="1"/>
</dbReference>
<dbReference type="SUPFAM" id="SSF55770">
    <property type="entry name" value="Profilin (actin-binding protein)"/>
    <property type="match status" value="1"/>
</dbReference>
<dbReference type="PROSITE" id="PS00414">
    <property type="entry name" value="PROFILIN"/>
    <property type="match status" value="1"/>
</dbReference>
<feature type="initiator methionine" description="Removed" evidence="1">
    <location>
        <position position="1"/>
    </location>
</feature>
<feature type="chain" id="PRO_0000425033" description="Profilin-2">
    <location>
        <begin position="2"/>
        <end position="134"/>
    </location>
</feature>
<feature type="short sequence motif" description="Involved in PIP2 interaction">
    <location>
        <begin position="84"/>
        <end position="100"/>
    </location>
</feature>
<feature type="modified residue" description="Phosphothreonine" evidence="1">
    <location>
        <position position="114"/>
    </location>
</feature>
<feature type="disulfide bond" evidence="3">
    <location>
        <begin position="13"/>
        <end position="118"/>
    </location>
</feature>
<keyword id="KW-0009">Actin-binding</keyword>
<keyword id="KW-0020">Allergen</keyword>
<keyword id="KW-0963">Cytoplasm</keyword>
<keyword id="KW-0206">Cytoskeleton</keyword>
<keyword id="KW-1015">Disulfide bond</keyword>
<keyword id="KW-0597">Phosphoprotein</keyword>
<accession>A4GE39</accession>
<comment type="function">
    <text evidence="1">Binds to actin and affects the structure of the cytoskeleton. At high concentrations, profilin prevents the polymerization of actin, whereas it enhances it at low concentrations (By similarity).</text>
</comment>
<comment type="subunit">
    <text evidence="1">Occurs in many kinds of cells as a complex with monomeric actin in a 1:1 ratio.</text>
</comment>
<comment type="subcellular location">
    <subcellularLocation>
        <location evidence="1">Cytoplasm</location>
        <location evidence="1">Cytoskeleton</location>
    </subcellularLocation>
</comment>
<comment type="PTM">
    <text evidence="1">Phosphorylated by MAP kinases.</text>
</comment>
<comment type="polymorphism">
    <text>Several isoforms of the allergen exist due to polymorphism.</text>
</comment>
<comment type="allergen">
    <text>Causes an allergic reaction in human.</text>
</comment>
<comment type="miscellaneous">
    <text evidence="3">The variability of the residues taking part of IgE-binding epitopes might be responsible of the difference in cross-reactivity among olive pollen cultivars, and between distantly related pollen species, leading to a variable range of allergy reactions among atopic patients.</text>
</comment>
<comment type="similarity">
    <text evidence="2">Belongs to the profilin family.</text>
</comment>
<name>PROBP_OLEEU</name>
<reference key="1">
    <citation type="journal article" date="2012" name="PLoS ONE">
        <title>Characterization of profilin polymorphism in pollen with a focus on multifunctionality.</title>
        <authorList>
            <person name="Jimenez-Lopez J.C."/>
            <person name="Morales S."/>
            <person name="Castro A.J."/>
            <person name="Volkmann D."/>
            <person name="Rodriguez-Garcia M.I."/>
            <person name="Alche Jde D."/>
        </authorList>
    </citation>
    <scope>NUCLEOTIDE SEQUENCE [MRNA]</scope>
    <scope>POLYMORPHISM</scope>
    <source>
        <strain>cv. Bella de Espana</strain>
        <tissue>Pollen</tissue>
    </source>
</reference>
<reference key="2">
    <citation type="journal article" date="2013" name="PLoS ONE">
        <title>Analysis of the effects of polymorphism on pollen profilin structural functionality and the generation of conformational, T- and B-cell epitopes.</title>
        <authorList>
            <person name="Jimenez-Lopez J.C."/>
            <person name="Rodriguez-Garcia M.I."/>
            <person name="Alche J.D."/>
        </authorList>
    </citation>
    <scope>3D-STRUCTURE MODELING</scope>
    <scope>DISULFIDE BOND</scope>
</reference>
<sequence length="134" mass="14444">MSWQAYVDDHLMCDIEGHEDHRLTAAAIVGHDGSVWAQSATFPQFKPEEMNGIMTDFSEPGHLAPTGLHLGGTKYMVVQGEAGAVIRGKKGSGGITIKKTGQALVFGIYEEPVTPGQCNMVVERLGDYLLEQGL</sequence>
<protein>
    <recommendedName>
        <fullName>Profilin-2</fullName>
    </recommendedName>
    <alternativeName>
        <fullName>Pollen allergen Ole e 2</fullName>
    </alternativeName>
    <allergenName>Ole e 2</allergenName>
</protein>
<organism>
    <name type="scientific">Olea europaea</name>
    <name type="common">Common olive</name>
    <dbReference type="NCBI Taxonomy" id="4146"/>
    <lineage>
        <taxon>Eukaryota</taxon>
        <taxon>Viridiplantae</taxon>
        <taxon>Streptophyta</taxon>
        <taxon>Embryophyta</taxon>
        <taxon>Tracheophyta</taxon>
        <taxon>Spermatophyta</taxon>
        <taxon>Magnoliopsida</taxon>
        <taxon>eudicotyledons</taxon>
        <taxon>Gunneridae</taxon>
        <taxon>Pentapetalae</taxon>
        <taxon>asterids</taxon>
        <taxon>lamiids</taxon>
        <taxon>Lamiales</taxon>
        <taxon>Oleaceae</taxon>
        <taxon>Oleeae</taxon>
        <taxon>Olea</taxon>
    </lineage>
</organism>
<evidence type="ECO:0000250" key="1"/>
<evidence type="ECO:0000305" key="2"/>
<evidence type="ECO:0000305" key="3">
    <source>
    </source>
</evidence>
<proteinExistence type="evidence at protein level"/>